<organism>
    <name type="scientific">Clostridium botulinum (strain Okra / Type B1)</name>
    <dbReference type="NCBI Taxonomy" id="498213"/>
    <lineage>
        <taxon>Bacteria</taxon>
        <taxon>Bacillati</taxon>
        <taxon>Bacillota</taxon>
        <taxon>Clostridia</taxon>
        <taxon>Eubacteriales</taxon>
        <taxon>Clostridiaceae</taxon>
        <taxon>Clostridium</taxon>
    </lineage>
</organism>
<name>PAND_CLOBK</name>
<feature type="chain" id="PRO_1000191958" description="Aspartate 1-decarboxylase beta chain" evidence="1">
    <location>
        <begin position="1"/>
        <end position="24"/>
    </location>
</feature>
<feature type="chain" id="PRO_1000191959" description="Aspartate 1-decarboxylase alpha chain" evidence="1">
    <location>
        <begin position="25"/>
        <end position="127"/>
    </location>
</feature>
<feature type="active site" description="Schiff-base intermediate with substrate; via pyruvic acid" evidence="1">
    <location>
        <position position="25"/>
    </location>
</feature>
<feature type="active site" description="Proton donor" evidence="1">
    <location>
        <position position="58"/>
    </location>
</feature>
<feature type="binding site" evidence="1">
    <location>
        <position position="57"/>
    </location>
    <ligand>
        <name>substrate</name>
    </ligand>
</feature>
<feature type="binding site" evidence="1">
    <location>
        <begin position="73"/>
        <end position="75"/>
    </location>
    <ligand>
        <name>substrate</name>
    </ligand>
</feature>
<feature type="modified residue" description="Pyruvic acid (Ser)" evidence="1">
    <location>
        <position position="25"/>
    </location>
</feature>
<proteinExistence type="inferred from homology"/>
<sequence length="127" mass="14331">MTITMLKSKIHRATVTEANLNYVGSITIDKYLMDKANILEYEKVQIVDIDNGNRFETYVIAGEKHSGVICLNGAAARMVQKGDKIIIMSYCSLTIDEANKFNPTVLFVDNKNNIEKLTNYEKHGEII</sequence>
<evidence type="ECO:0000255" key="1">
    <source>
        <dbReference type="HAMAP-Rule" id="MF_00446"/>
    </source>
</evidence>
<gene>
    <name evidence="1" type="primary">panD</name>
    <name type="ordered locus">CLD_0320</name>
</gene>
<protein>
    <recommendedName>
        <fullName evidence="1">Aspartate 1-decarboxylase</fullName>
        <ecNumber evidence="1">4.1.1.11</ecNumber>
    </recommendedName>
    <alternativeName>
        <fullName evidence="1">Aspartate alpha-decarboxylase</fullName>
    </alternativeName>
    <component>
        <recommendedName>
            <fullName evidence="1">Aspartate 1-decarboxylase beta chain</fullName>
        </recommendedName>
    </component>
    <component>
        <recommendedName>
            <fullName evidence="1">Aspartate 1-decarboxylase alpha chain</fullName>
        </recommendedName>
    </component>
</protein>
<reference key="1">
    <citation type="journal article" date="2007" name="PLoS ONE">
        <title>Analysis of the neurotoxin complex genes in Clostridium botulinum A1-A4 and B1 strains: BoNT/A3, /Ba4 and /B1 clusters are located within plasmids.</title>
        <authorList>
            <person name="Smith T.J."/>
            <person name="Hill K.K."/>
            <person name="Foley B.T."/>
            <person name="Detter J.C."/>
            <person name="Munk A.C."/>
            <person name="Bruce D.C."/>
            <person name="Doggett N.A."/>
            <person name="Smith L.A."/>
            <person name="Marks J.D."/>
            <person name="Xie G."/>
            <person name="Brettin T.S."/>
        </authorList>
    </citation>
    <scope>NUCLEOTIDE SEQUENCE [LARGE SCALE GENOMIC DNA]</scope>
    <source>
        <strain>Okra / Type B1</strain>
    </source>
</reference>
<comment type="function">
    <text evidence="1">Catalyzes the pyruvoyl-dependent decarboxylation of aspartate to produce beta-alanine.</text>
</comment>
<comment type="catalytic activity">
    <reaction evidence="1">
        <text>L-aspartate + H(+) = beta-alanine + CO2</text>
        <dbReference type="Rhea" id="RHEA:19497"/>
        <dbReference type="ChEBI" id="CHEBI:15378"/>
        <dbReference type="ChEBI" id="CHEBI:16526"/>
        <dbReference type="ChEBI" id="CHEBI:29991"/>
        <dbReference type="ChEBI" id="CHEBI:57966"/>
        <dbReference type="EC" id="4.1.1.11"/>
    </reaction>
</comment>
<comment type="cofactor">
    <cofactor evidence="1">
        <name>pyruvate</name>
        <dbReference type="ChEBI" id="CHEBI:15361"/>
    </cofactor>
    <text evidence="1">Binds 1 pyruvoyl group covalently per subunit.</text>
</comment>
<comment type="pathway">
    <text evidence="1">Cofactor biosynthesis; (R)-pantothenate biosynthesis; beta-alanine from L-aspartate: step 1/1.</text>
</comment>
<comment type="subunit">
    <text evidence="1">Heterooctamer of four alpha and four beta subunits.</text>
</comment>
<comment type="subcellular location">
    <subcellularLocation>
        <location evidence="1">Cytoplasm</location>
    </subcellularLocation>
</comment>
<comment type="PTM">
    <text evidence="1">Is synthesized initially as an inactive proenzyme, which is activated by self-cleavage at a specific serine bond to produce a beta-subunit with a hydroxyl group at its C-terminus and an alpha-subunit with a pyruvoyl group at its N-terminus.</text>
</comment>
<comment type="similarity">
    <text evidence="1">Belongs to the PanD family.</text>
</comment>
<keyword id="KW-0068">Autocatalytic cleavage</keyword>
<keyword id="KW-0963">Cytoplasm</keyword>
<keyword id="KW-0210">Decarboxylase</keyword>
<keyword id="KW-0456">Lyase</keyword>
<keyword id="KW-0566">Pantothenate biosynthesis</keyword>
<keyword id="KW-0670">Pyruvate</keyword>
<keyword id="KW-0704">Schiff base</keyword>
<keyword id="KW-0865">Zymogen</keyword>
<dbReference type="EC" id="4.1.1.11" evidence="1"/>
<dbReference type="EMBL" id="CP000939">
    <property type="protein sequence ID" value="ACA46750.1"/>
    <property type="molecule type" value="Genomic_DNA"/>
</dbReference>
<dbReference type="RefSeq" id="WP_003399593.1">
    <property type="nucleotide sequence ID" value="NC_010516.1"/>
</dbReference>
<dbReference type="SMR" id="B1IEL4"/>
<dbReference type="KEGG" id="cbb:CLD_0320"/>
<dbReference type="HOGENOM" id="CLU_115305_2_0_9"/>
<dbReference type="UniPathway" id="UPA00028">
    <property type="reaction ID" value="UER00002"/>
</dbReference>
<dbReference type="Proteomes" id="UP000008541">
    <property type="component" value="Chromosome"/>
</dbReference>
<dbReference type="GO" id="GO:0005829">
    <property type="term" value="C:cytosol"/>
    <property type="evidence" value="ECO:0007669"/>
    <property type="project" value="TreeGrafter"/>
</dbReference>
<dbReference type="GO" id="GO:0004068">
    <property type="term" value="F:aspartate 1-decarboxylase activity"/>
    <property type="evidence" value="ECO:0007669"/>
    <property type="project" value="UniProtKB-UniRule"/>
</dbReference>
<dbReference type="GO" id="GO:0006523">
    <property type="term" value="P:alanine biosynthetic process"/>
    <property type="evidence" value="ECO:0007669"/>
    <property type="project" value="InterPro"/>
</dbReference>
<dbReference type="GO" id="GO:0015940">
    <property type="term" value="P:pantothenate biosynthetic process"/>
    <property type="evidence" value="ECO:0007669"/>
    <property type="project" value="UniProtKB-UniRule"/>
</dbReference>
<dbReference type="CDD" id="cd06919">
    <property type="entry name" value="Asp_decarbox"/>
    <property type="match status" value="1"/>
</dbReference>
<dbReference type="Gene3D" id="2.40.40.20">
    <property type="match status" value="1"/>
</dbReference>
<dbReference type="HAMAP" id="MF_00446">
    <property type="entry name" value="PanD"/>
    <property type="match status" value="1"/>
</dbReference>
<dbReference type="InterPro" id="IPR009010">
    <property type="entry name" value="Asp_de-COase-like_dom_sf"/>
</dbReference>
<dbReference type="InterPro" id="IPR003190">
    <property type="entry name" value="Asp_decarbox"/>
</dbReference>
<dbReference type="NCBIfam" id="TIGR00223">
    <property type="entry name" value="panD"/>
    <property type="match status" value="1"/>
</dbReference>
<dbReference type="PANTHER" id="PTHR21012">
    <property type="entry name" value="ASPARTATE 1-DECARBOXYLASE"/>
    <property type="match status" value="1"/>
</dbReference>
<dbReference type="PANTHER" id="PTHR21012:SF0">
    <property type="entry name" value="ASPARTATE 1-DECARBOXYLASE"/>
    <property type="match status" value="1"/>
</dbReference>
<dbReference type="Pfam" id="PF02261">
    <property type="entry name" value="Asp_decarbox"/>
    <property type="match status" value="1"/>
</dbReference>
<dbReference type="PIRSF" id="PIRSF006246">
    <property type="entry name" value="Asp_decarbox"/>
    <property type="match status" value="1"/>
</dbReference>
<dbReference type="SUPFAM" id="SSF50692">
    <property type="entry name" value="ADC-like"/>
    <property type="match status" value="1"/>
</dbReference>
<accession>B1IEL4</accession>